<organism>
    <name type="scientific">Homo sapiens</name>
    <name type="common">Human</name>
    <dbReference type="NCBI Taxonomy" id="9606"/>
    <lineage>
        <taxon>Eukaryota</taxon>
        <taxon>Metazoa</taxon>
        <taxon>Chordata</taxon>
        <taxon>Craniata</taxon>
        <taxon>Vertebrata</taxon>
        <taxon>Euteleostomi</taxon>
        <taxon>Mammalia</taxon>
        <taxon>Eutheria</taxon>
        <taxon>Euarchontoglires</taxon>
        <taxon>Primates</taxon>
        <taxon>Haplorrhini</taxon>
        <taxon>Catarrhini</taxon>
        <taxon>Hominidae</taxon>
        <taxon>Homo</taxon>
    </lineage>
</organism>
<proteinExistence type="evidence at transcript level"/>
<gene>
    <name type="primary">KRTAP2-1</name>
    <name type="synonym">KAP2.1</name>
    <name type="synonym">KRTAP2.1A</name>
    <name type="synonym">KRTAP2.1B</name>
</gene>
<reference key="1">
    <citation type="journal article" date="2006" name="Nature">
        <title>DNA sequence of human chromosome 17 and analysis of rearrangement in the human lineage.</title>
        <authorList>
            <person name="Zody M.C."/>
            <person name="Garber M."/>
            <person name="Adams D.J."/>
            <person name="Sharpe T."/>
            <person name="Harrow J."/>
            <person name="Lupski J.R."/>
            <person name="Nicholson C."/>
            <person name="Searle S.M."/>
            <person name="Wilming L."/>
            <person name="Young S.K."/>
            <person name="Abouelleil A."/>
            <person name="Allen N.R."/>
            <person name="Bi W."/>
            <person name="Bloom T."/>
            <person name="Borowsky M.L."/>
            <person name="Bugalter B.E."/>
            <person name="Butler J."/>
            <person name="Chang J.L."/>
            <person name="Chen C.-K."/>
            <person name="Cook A."/>
            <person name="Corum B."/>
            <person name="Cuomo C.A."/>
            <person name="de Jong P.J."/>
            <person name="DeCaprio D."/>
            <person name="Dewar K."/>
            <person name="FitzGerald M."/>
            <person name="Gilbert J."/>
            <person name="Gibson R."/>
            <person name="Gnerre S."/>
            <person name="Goldstein S."/>
            <person name="Grafham D.V."/>
            <person name="Grocock R."/>
            <person name="Hafez N."/>
            <person name="Hagopian D.S."/>
            <person name="Hart E."/>
            <person name="Norman C.H."/>
            <person name="Humphray S."/>
            <person name="Jaffe D.B."/>
            <person name="Jones M."/>
            <person name="Kamal M."/>
            <person name="Khodiyar V.K."/>
            <person name="LaButti K."/>
            <person name="Laird G."/>
            <person name="Lehoczky J."/>
            <person name="Liu X."/>
            <person name="Lokyitsang T."/>
            <person name="Loveland J."/>
            <person name="Lui A."/>
            <person name="Macdonald P."/>
            <person name="Major J.E."/>
            <person name="Matthews L."/>
            <person name="Mauceli E."/>
            <person name="McCarroll S.A."/>
            <person name="Mihalev A.H."/>
            <person name="Mudge J."/>
            <person name="Nguyen C."/>
            <person name="Nicol R."/>
            <person name="O'Leary S.B."/>
            <person name="Osoegawa K."/>
            <person name="Schwartz D.C."/>
            <person name="Shaw-Smith C."/>
            <person name="Stankiewicz P."/>
            <person name="Steward C."/>
            <person name="Swarbreck D."/>
            <person name="Venkataraman V."/>
            <person name="Whittaker C.A."/>
            <person name="Yang X."/>
            <person name="Zimmer A.R."/>
            <person name="Bradley A."/>
            <person name="Hubbard T."/>
            <person name="Birren B.W."/>
            <person name="Rogers J."/>
            <person name="Lander E.S."/>
            <person name="Nusbaum C."/>
        </authorList>
    </citation>
    <scope>NUCLEOTIDE SEQUENCE [LARGE SCALE GENOMIC DNA]</scope>
</reference>
<reference key="2">
    <citation type="journal article" date="2001" name="J. Biol. Chem.">
        <title>Characterization of a cluster of human high/ultrahigh sulfur keratin-associated protein genes embedded in the type I keratin gene domain on chromosome 17q12-21.</title>
        <authorList>
            <person name="Rogers M.A."/>
            <person name="Langbein L."/>
            <person name="Winter H."/>
            <person name="Ehmann C."/>
            <person name="Praetzel S."/>
            <person name="Korn B."/>
            <person name="Schweizer J."/>
        </authorList>
    </citation>
    <scope>NUCLEOTIDE SEQUENCE [MRNA] OF 33-128</scope>
    <source>
        <tissue>Scalp</tissue>
    </source>
</reference>
<name>KRA21_HUMAN</name>
<protein>
    <recommendedName>
        <fullName>Keratin-associated protein 2-1</fullName>
    </recommendedName>
    <alternativeName>
        <fullName>High sulfur keratin-associated protein 2.1</fullName>
    </alternativeName>
    <alternativeName>
        <fullName>Keratin-associated protein 2.1</fullName>
    </alternativeName>
</protein>
<feature type="chain" id="PRO_0000331450" description="Keratin-associated protein 2-1">
    <location>
        <begin position="1"/>
        <end position="128"/>
    </location>
</feature>
<feature type="region of interest" description="10 X 5 AA repeats of C-C-[CDPQRWG]-[APRS]-[CIPSTVD]">
    <location>
        <begin position="5"/>
        <end position="112"/>
    </location>
</feature>
<dbReference type="EMBL" id="AC007455">
    <property type="status" value="NOT_ANNOTATED_CDS"/>
    <property type="molecule type" value="Genomic_DNA"/>
</dbReference>
<dbReference type="EMBL" id="AJ296345">
    <property type="protein sequence ID" value="CAC24555.1"/>
    <property type="molecule type" value="mRNA"/>
</dbReference>
<dbReference type="CCDS" id="CCDS42325.1"/>
<dbReference type="RefSeq" id="NP_001116859.1">
    <property type="nucleotide sequence ID" value="NM_001123387.1"/>
</dbReference>
<dbReference type="FunCoup" id="Q9BYU5">
    <property type="interactions" value="20"/>
</dbReference>
<dbReference type="STRING" id="9606.ENSP00000375238"/>
<dbReference type="SwissPalm" id="Q9BYU5"/>
<dbReference type="BioMuta" id="KRTAP2-1"/>
<dbReference type="DMDM" id="187609617"/>
<dbReference type="jPOST" id="Q9BYU5"/>
<dbReference type="MassIVE" id="Q9BYU5"/>
<dbReference type="PaxDb" id="9606-ENSP00000375238"/>
<dbReference type="PeptideAtlas" id="Q9BYU5"/>
<dbReference type="Antibodypedia" id="76786">
    <property type="antibodies" value="8 antibodies from 5 providers"/>
</dbReference>
<dbReference type="Ensembl" id="ENST00000391419.3">
    <property type="protein sequence ID" value="ENSP00000375238.3"/>
    <property type="gene ID" value="ENSG00000212725.4"/>
</dbReference>
<dbReference type="Ensembl" id="ENST00000571136.1">
    <property type="protein sequence ID" value="ENSP00000458444.1"/>
    <property type="gene ID" value="ENSG00000261852.3"/>
</dbReference>
<dbReference type="GeneID" id="728279"/>
<dbReference type="GeneID" id="81872"/>
<dbReference type="KEGG" id="hsa:81872"/>
<dbReference type="MANE-Select" id="ENST00000391419.3">
    <property type="protein sequence ID" value="ENSP00000375238.3"/>
    <property type="RefSeq nucleotide sequence ID" value="NM_001123387.1"/>
    <property type="RefSeq protein sequence ID" value="NP_001116859.1"/>
</dbReference>
<dbReference type="UCSC" id="uc010cxi.4">
    <property type="organism name" value="human"/>
</dbReference>
<dbReference type="AGR" id="HGNC:16775"/>
<dbReference type="AGR" id="HGNC:18905"/>
<dbReference type="CTD" id="728279"/>
<dbReference type="CTD" id="81872"/>
<dbReference type="DisGeNET" id="81872"/>
<dbReference type="GeneCards" id="KRTAP2-1"/>
<dbReference type="HGNC" id="HGNC:16775">
    <property type="gene designation" value="KRTAP2-1"/>
</dbReference>
<dbReference type="HPA" id="ENSG00000212725">
    <property type="expression patterns" value="Tissue enriched (skin)"/>
</dbReference>
<dbReference type="neXtProt" id="NX_Q9BYU5"/>
<dbReference type="OpenTargets" id="ENSG00000212725"/>
<dbReference type="PharmGKB" id="PA38415"/>
<dbReference type="VEuPathDB" id="HostDB:ENSG00000212725"/>
<dbReference type="eggNOG" id="KOG4726">
    <property type="taxonomic scope" value="Eukaryota"/>
</dbReference>
<dbReference type="GeneTree" id="ENSGT00940000162736"/>
<dbReference type="HOGENOM" id="CLU_113141_3_0_1"/>
<dbReference type="InParanoid" id="Q9BYU5"/>
<dbReference type="OMA" id="QPAPCRM"/>
<dbReference type="OrthoDB" id="9538749at2759"/>
<dbReference type="PAN-GO" id="Q9BYU5">
    <property type="GO annotations" value="0 GO annotations based on evolutionary models"/>
</dbReference>
<dbReference type="PhylomeDB" id="Q9BYU5"/>
<dbReference type="PathwayCommons" id="Q9BYU5"/>
<dbReference type="Reactome" id="R-HSA-6805567">
    <property type="pathway name" value="Keratinization"/>
</dbReference>
<dbReference type="SignaLink" id="Q9BYU5"/>
<dbReference type="BioGRID-ORCS" id="728279">
    <property type="hits" value="26 hits in 644 CRISPR screens"/>
</dbReference>
<dbReference type="BioGRID-ORCS" id="81872">
    <property type="hits" value="14 hits in 267 CRISPR screens"/>
</dbReference>
<dbReference type="Pharos" id="Q9BYU5">
    <property type="development level" value="Tdark"/>
</dbReference>
<dbReference type="PRO" id="PR:Q9BYU5"/>
<dbReference type="Proteomes" id="UP000005640">
    <property type="component" value="Chromosome 17"/>
</dbReference>
<dbReference type="RNAct" id="Q9BYU5">
    <property type="molecule type" value="protein"/>
</dbReference>
<dbReference type="Bgee" id="ENSG00000212725">
    <property type="expression patterns" value="Expressed in skin of abdomen and 46 other cell types or tissues"/>
</dbReference>
<dbReference type="ExpressionAtlas" id="Q9BYU5">
    <property type="expression patterns" value="baseline and differential"/>
</dbReference>
<dbReference type="GO" id="GO:0005829">
    <property type="term" value="C:cytosol"/>
    <property type="evidence" value="ECO:0000304"/>
    <property type="project" value="Reactome"/>
</dbReference>
<dbReference type="GO" id="GO:0045095">
    <property type="term" value="C:keratin filament"/>
    <property type="evidence" value="ECO:0007669"/>
    <property type="project" value="InterPro"/>
</dbReference>
<dbReference type="InterPro" id="IPR002494">
    <property type="entry name" value="KAP"/>
</dbReference>
<dbReference type="InterPro" id="IPR052154">
    <property type="entry name" value="KRTAP_type_2-like"/>
</dbReference>
<dbReference type="PANTHER" id="PTHR48425">
    <property type="entry name" value="KERATIN-ASSOCIATED PROTEIN 2-1"/>
    <property type="match status" value="1"/>
</dbReference>
<dbReference type="PANTHER" id="PTHR48425:SF1">
    <property type="entry name" value="KERATIN-ASSOCIATED PROTEIN 2-1"/>
    <property type="match status" value="1"/>
</dbReference>
<dbReference type="Pfam" id="PF01500">
    <property type="entry name" value="Keratin_B2"/>
    <property type="match status" value="1"/>
</dbReference>
<dbReference type="Pfam" id="PF13885">
    <property type="entry name" value="Keratin_B2_2"/>
    <property type="match status" value="1"/>
</dbReference>
<keyword id="KW-0416">Keratin</keyword>
<keyword id="KW-1185">Reference proteome</keyword>
<keyword id="KW-0677">Repeat</keyword>
<sequence length="128" mass="13514">MTGSCCGSTFSSLSYGGGCCQPCCCRDPCCCRPVTCQTTVCRPVTCVPRCTRPICEPCRRPVCCDPCSLQEGCCRPITCCPSSCTAVVCRPCCWATTCCQPVSVQSPCCRPPCGQPTPCSTTCRTSSC</sequence>
<comment type="function">
    <text evidence="1">In the hair cortex, hair keratin intermediate filaments are embedded in an interfilamentous matrix, consisting of hair keratin-associated proteins (KRTAP), which are essential for the formation of a rigid and resistant hair shaft through their extensive disulfide bond cross-linking with abundant cysteine residues of hair keratins. The matrix proteins include the high-sulfur and high-glycine-tyrosine keratins (By similarity).</text>
</comment>
<comment type="subunit">
    <text evidence="1">Interacts with hair keratins.</text>
</comment>
<comment type="similarity">
    <text evidence="2">Belongs to the KRTAP type 2 family.</text>
</comment>
<accession>Q9BYU5</accession>
<evidence type="ECO:0000250" key="1"/>
<evidence type="ECO:0000305" key="2"/>